<name>YFG5_SCHPO</name>
<accession>O13844</accession>
<reference key="1">
    <citation type="journal article" date="2002" name="Nature">
        <title>The genome sequence of Schizosaccharomyces pombe.</title>
        <authorList>
            <person name="Wood V."/>
            <person name="Gwilliam R."/>
            <person name="Rajandream M.A."/>
            <person name="Lyne M.H."/>
            <person name="Lyne R."/>
            <person name="Stewart A."/>
            <person name="Sgouros J.G."/>
            <person name="Peat N."/>
            <person name="Hayles J."/>
            <person name="Baker S.G."/>
            <person name="Basham D."/>
            <person name="Bowman S."/>
            <person name="Brooks K."/>
            <person name="Brown D."/>
            <person name="Brown S."/>
            <person name="Chillingworth T."/>
            <person name="Churcher C.M."/>
            <person name="Collins M."/>
            <person name="Connor R."/>
            <person name="Cronin A."/>
            <person name="Davis P."/>
            <person name="Feltwell T."/>
            <person name="Fraser A."/>
            <person name="Gentles S."/>
            <person name="Goble A."/>
            <person name="Hamlin N."/>
            <person name="Harris D.E."/>
            <person name="Hidalgo J."/>
            <person name="Hodgson G."/>
            <person name="Holroyd S."/>
            <person name="Hornsby T."/>
            <person name="Howarth S."/>
            <person name="Huckle E.J."/>
            <person name="Hunt S."/>
            <person name="Jagels K."/>
            <person name="James K.D."/>
            <person name="Jones L."/>
            <person name="Jones M."/>
            <person name="Leather S."/>
            <person name="McDonald S."/>
            <person name="McLean J."/>
            <person name="Mooney P."/>
            <person name="Moule S."/>
            <person name="Mungall K.L."/>
            <person name="Murphy L.D."/>
            <person name="Niblett D."/>
            <person name="Odell C."/>
            <person name="Oliver K."/>
            <person name="O'Neil S."/>
            <person name="Pearson D."/>
            <person name="Quail M.A."/>
            <person name="Rabbinowitsch E."/>
            <person name="Rutherford K.M."/>
            <person name="Rutter S."/>
            <person name="Saunders D."/>
            <person name="Seeger K."/>
            <person name="Sharp S."/>
            <person name="Skelton J."/>
            <person name="Simmonds M.N."/>
            <person name="Squares R."/>
            <person name="Squares S."/>
            <person name="Stevens K."/>
            <person name="Taylor K."/>
            <person name="Taylor R.G."/>
            <person name="Tivey A."/>
            <person name="Walsh S.V."/>
            <person name="Warren T."/>
            <person name="Whitehead S."/>
            <person name="Woodward J.R."/>
            <person name="Volckaert G."/>
            <person name="Aert R."/>
            <person name="Robben J."/>
            <person name="Grymonprez B."/>
            <person name="Weltjens I."/>
            <person name="Vanstreels E."/>
            <person name="Rieger M."/>
            <person name="Schaefer M."/>
            <person name="Mueller-Auer S."/>
            <person name="Gabel C."/>
            <person name="Fuchs M."/>
            <person name="Duesterhoeft A."/>
            <person name="Fritzc C."/>
            <person name="Holzer E."/>
            <person name="Moestl D."/>
            <person name="Hilbert H."/>
            <person name="Borzym K."/>
            <person name="Langer I."/>
            <person name="Beck A."/>
            <person name="Lehrach H."/>
            <person name="Reinhardt R."/>
            <person name="Pohl T.M."/>
            <person name="Eger P."/>
            <person name="Zimmermann W."/>
            <person name="Wedler H."/>
            <person name="Wambutt R."/>
            <person name="Purnelle B."/>
            <person name="Goffeau A."/>
            <person name="Cadieu E."/>
            <person name="Dreano S."/>
            <person name="Gloux S."/>
            <person name="Lelaure V."/>
            <person name="Mottier S."/>
            <person name="Galibert F."/>
            <person name="Aves S.J."/>
            <person name="Xiang Z."/>
            <person name="Hunt C."/>
            <person name="Moore K."/>
            <person name="Hurst S.M."/>
            <person name="Lucas M."/>
            <person name="Rochet M."/>
            <person name="Gaillardin C."/>
            <person name="Tallada V.A."/>
            <person name="Garzon A."/>
            <person name="Thode G."/>
            <person name="Daga R.R."/>
            <person name="Cruzado L."/>
            <person name="Jimenez J."/>
            <person name="Sanchez M."/>
            <person name="del Rey F."/>
            <person name="Benito J."/>
            <person name="Dominguez A."/>
            <person name="Revuelta J.L."/>
            <person name="Moreno S."/>
            <person name="Armstrong J."/>
            <person name="Forsburg S.L."/>
            <person name="Cerutti L."/>
            <person name="Lowe T."/>
            <person name="McCombie W.R."/>
            <person name="Paulsen I."/>
            <person name="Potashkin J."/>
            <person name="Shpakovski G.V."/>
            <person name="Ussery D."/>
            <person name="Barrell B.G."/>
            <person name="Nurse P."/>
        </authorList>
    </citation>
    <scope>NUCLEOTIDE SEQUENCE [LARGE SCALE GENOMIC DNA]</scope>
    <source>
        <strain>972 / ATCC 24843</strain>
    </source>
</reference>
<reference key="2">
    <citation type="journal article" date="2006" name="Nat. Biotechnol.">
        <title>ORFeome cloning and global analysis of protein localization in the fission yeast Schizosaccharomyces pombe.</title>
        <authorList>
            <person name="Matsuyama A."/>
            <person name="Arai R."/>
            <person name="Yashiroda Y."/>
            <person name="Shirai A."/>
            <person name="Kamata A."/>
            <person name="Sekido S."/>
            <person name="Kobayashi Y."/>
            <person name="Hashimoto A."/>
            <person name="Hamamoto M."/>
            <person name="Hiraoka Y."/>
            <person name="Horinouchi S."/>
            <person name="Yoshida M."/>
        </authorList>
    </citation>
    <scope>SUBCELLULAR LOCATION [LARGE SCALE ANALYSIS]</scope>
</reference>
<organism>
    <name type="scientific">Schizosaccharomyces pombe (strain 972 / ATCC 24843)</name>
    <name type="common">Fission yeast</name>
    <dbReference type="NCBI Taxonomy" id="284812"/>
    <lineage>
        <taxon>Eukaryota</taxon>
        <taxon>Fungi</taxon>
        <taxon>Dikarya</taxon>
        <taxon>Ascomycota</taxon>
        <taxon>Taphrinomycotina</taxon>
        <taxon>Schizosaccharomycetes</taxon>
        <taxon>Schizosaccharomycetales</taxon>
        <taxon>Schizosaccharomycetaceae</taxon>
        <taxon>Schizosaccharomyces</taxon>
    </lineage>
</organism>
<sequence length="291" mass="31574">MSTVAKTNPKSSNKPGPVKSIIAGGVAGAIEISITYPAEFAKTRLQLYRNVEGTKAKLPPFGLEWYRGCSTVIVGNSLKAAVRFFAFDSIKKSLSDEHGHLTGPRTVLAGLGAGVAESVLVLTPFESIKTAIIDDRKRPNPRLKGFLQASRIIVHENGIRGLYRGLAATVARQAANSGVRFTAYNSIKQSLQSRLPPDEKLSTVTTFLVGSVAGIITVYCTQPIDTVKSRMQSLSASKEYKNSIHCAYKILTQDGLLRFWSGATPRLARLILSGGIVFTVYEKVMEILKPF</sequence>
<keyword id="KW-0472">Membrane</keyword>
<keyword id="KW-0496">Mitochondrion</keyword>
<keyword id="KW-0999">Mitochondrion inner membrane</keyword>
<keyword id="KW-1185">Reference proteome</keyword>
<keyword id="KW-0677">Repeat</keyword>
<keyword id="KW-0812">Transmembrane</keyword>
<keyword id="KW-1133">Transmembrane helix</keyword>
<keyword id="KW-0813">Transport</keyword>
<comment type="subcellular location">
    <subcellularLocation>
        <location evidence="2">Mitochondrion inner membrane</location>
        <topology evidence="2">Multi-pass membrane protein</topology>
    </subcellularLocation>
</comment>
<comment type="similarity">
    <text evidence="3">Belongs to the mitochondrial carrier (TC 2.A.29) family.</text>
</comment>
<feature type="chain" id="PRO_0000311180" description="Uncharacterized mitochondrial carrier C19G12.05">
    <location>
        <begin position="1"/>
        <end position="291"/>
    </location>
</feature>
<feature type="transmembrane region" description="Helical; Name=1" evidence="1">
    <location>
        <begin position="21"/>
        <end position="41"/>
    </location>
</feature>
<feature type="transmembrane region" description="Helical; Name=2" evidence="1">
    <location>
        <begin position="70"/>
        <end position="90"/>
    </location>
</feature>
<feature type="transmembrane region" description="Helical; Name=3" evidence="1">
    <location>
        <begin position="108"/>
        <end position="128"/>
    </location>
</feature>
<feature type="transmembrane region" description="Helical; Name=4" evidence="1">
    <location>
        <begin position="169"/>
        <end position="189"/>
    </location>
</feature>
<feature type="transmembrane region" description="Helical; Name=5" evidence="1">
    <location>
        <begin position="201"/>
        <end position="221"/>
    </location>
</feature>
<feature type="transmembrane region" description="Helical; Name=6" evidence="1">
    <location>
        <begin position="259"/>
        <end position="280"/>
    </location>
</feature>
<feature type="repeat" description="Solcar 1">
    <location>
        <begin position="15"/>
        <end position="93"/>
    </location>
</feature>
<feature type="repeat" description="Solcar 2">
    <location>
        <begin position="104"/>
        <end position="190"/>
    </location>
</feature>
<feature type="repeat" description="Solcar 3">
    <location>
        <begin position="201"/>
        <end position="287"/>
    </location>
</feature>
<protein>
    <recommendedName>
        <fullName>Uncharacterized mitochondrial carrier C19G12.05</fullName>
    </recommendedName>
</protein>
<proteinExistence type="inferred from homology"/>
<dbReference type="EMBL" id="CU329670">
    <property type="protein sequence ID" value="CAB10116.1"/>
    <property type="molecule type" value="Genomic_DNA"/>
</dbReference>
<dbReference type="PIR" id="T37992">
    <property type="entry name" value="T37992"/>
</dbReference>
<dbReference type="SMR" id="O13844"/>
<dbReference type="BioGRID" id="278917">
    <property type="interactions" value="3"/>
</dbReference>
<dbReference type="FunCoup" id="O13844">
    <property type="interactions" value="275"/>
</dbReference>
<dbReference type="STRING" id="284812.O13844"/>
<dbReference type="SwissPalm" id="O13844"/>
<dbReference type="PaxDb" id="4896-SPAC19G12.05.1"/>
<dbReference type="EnsemblFungi" id="SPAC19G12.05.1">
    <property type="protein sequence ID" value="SPAC19G12.05.1:pep"/>
    <property type="gene ID" value="SPAC19G12.05"/>
</dbReference>
<dbReference type="KEGG" id="spo:2542456"/>
<dbReference type="PomBase" id="SPAC19G12.05"/>
<dbReference type="VEuPathDB" id="FungiDB:SPAC19G12.05"/>
<dbReference type="eggNOG" id="KOG0756">
    <property type="taxonomic scope" value="Eukaryota"/>
</dbReference>
<dbReference type="HOGENOM" id="CLU_015166_5_1_1"/>
<dbReference type="InParanoid" id="O13844"/>
<dbReference type="OMA" id="AWYAGCT"/>
<dbReference type="PhylomeDB" id="O13844"/>
<dbReference type="Reactome" id="R-SPO-428643">
    <property type="pathway name" value="Organic anion transporters"/>
</dbReference>
<dbReference type="PRO" id="PR:O13844"/>
<dbReference type="Proteomes" id="UP000002485">
    <property type="component" value="Chromosome I"/>
</dbReference>
<dbReference type="GO" id="GO:0005743">
    <property type="term" value="C:mitochondrial inner membrane"/>
    <property type="evidence" value="ECO:0000250"/>
    <property type="project" value="PomBase"/>
</dbReference>
<dbReference type="GO" id="GO:0005739">
    <property type="term" value="C:mitochondrion"/>
    <property type="evidence" value="ECO:0007005"/>
    <property type="project" value="PomBase"/>
</dbReference>
<dbReference type="GO" id="GO:0071913">
    <property type="term" value="F:citrate secondary active transmembrane transporter activity"/>
    <property type="evidence" value="ECO:0000318"/>
    <property type="project" value="GO_Central"/>
</dbReference>
<dbReference type="GO" id="GO:0006843">
    <property type="term" value="P:mitochondrial citrate transmembrane transport"/>
    <property type="evidence" value="ECO:0000318"/>
    <property type="project" value="GO_Central"/>
</dbReference>
<dbReference type="FunFam" id="1.50.40.10:FF:000064">
    <property type="entry name" value="Mitochondrial tricarboxylate transporter (Ctp)"/>
    <property type="match status" value="1"/>
</dbReference>
<dbReference type="Gene3D" id="1.50.40.10">
    <property type="entry name" value="Mitochondrial carrier domain"/>
    <property type="match status" value="2"/>
</dbReference>
<dbReference type="InterPro" id="IPR002067">
    <property type="entry name" value="Mit_carrier"/>
</dbReference>
<dbReference type="InterPro" id="IPR018108">
    <property type="entry name" value="Mitochondrial_sb/sol_carrier"/>
</dbReference>
<dbReference type="InterPro" id="IPR023395">
    <property type="entry name" value="Mt_carrier_dom_sf"/>
</dbReference>
<dbReference type="InterPro" id="IPR049563">
    <property type="entry name" value="TXTP-like"/>
</dbReference>
<dbReference type="PANTHER" id="PTHR45788">
    <property type="entry name" value="SUCCINATE/FUMARATE MITOCHONDRIAL TRANSPORTER-RELATED"/>
    <property type="match status" value="1"/>
</dbReference>
<dbReference type="PANTHER" id="PTHR45788:SF4">
    <property type="entry name" value="TRICARBOXYLATE TRANSPORT PROTEIN, MITOCHONDRIAL"/>
    <property type="match status" value="1"/>
</dbReference>
<dbReference type="Pfam" id="PF00153">
    <property type="entry name" value="Mito_carr"/>
    <property type="match status" value="3"/>
</dbReference>
<dbReference type="PRINTS" id="PR00926">
    <property type="entry name" value="MITOCARRIER"/>
</dbReference>
<dbReference type="SUPFAM" id="SSF103506">
    <property type="entry name" value="Mitochondrial carrier"/>
    <property type="match status" value="1"/>
</dbReference>
<dbReference type="PROSITE" id="PS50920">
    <property type="entry name" value="SOLCAR"/>
    <property type="match status" value="3"/>
</dbReference>
<gene>
    <name type="ORF">SPAC19G12.05</name>
</gene>
<evidence type="ECO:0000255" key="1"/>
<evidence type="ECO:0000269" key="2">
    <source>
    </source>
</evidence>
<evidence type="ECO:0000305" key="3"/>